<sequence length="299" mass="32886">MVISVPATSANLGPGFDTLGLALKLHNTFSITPSKLSSIHISGEGEDRPKLRIDNVFIKIFNEILALHNYPMQPFKFSFHNAIPISRGLGSSSAVIVGAIVGAYHIMQKPINKSEILQLALSYENHPDNITPALYGGFNVSMLDSSLKTKEQVINVQALLPTDIKAVVVIPNVAISTKFSRRSLPKKYSTKDAVFNLSHACMLSAAFITHKWELLRVASQDRFHQELRMKNIPALFNVQKIALENGALLSTLSGSGSSFLNICYCDDSGNLAHILQKHFPKFRVIELEFDNIGATLIES</sequence>
<accession>Q7VHF4</accession>
<name>KHSE_HELHP</name>
<dbReference type="EC" id="2.7.1.39" evidence="1"/>
<dbReference type="EMBL" id="AE017125">
    <property type="protein sequence ID" value="AAP77610.1"/>
    <property type="molecule type" value="Genomic_DNA"/>
</dbReference>
<dbReference type="RefSeq" id="WP_011115853.1">
    <property type="nucleotide sequence ID" value="NC_004917.1"/>
</dbReference>
<dbReference type="SMR" id="Q7VHF4"/>
<dbReference type="STRING" id="235279.HH_1013"/>
<dbReference type="KEGG" id="hhe:HH_1013"/>
<dbReference type="eggNOG" id="COG0083">
    <property type="taxonomic scope" value="Bacteria"/>
</dbReference>
<dbReference type="HOGENOM" id="CLU_041243_0_0_7"/>
<dbReference type="OrthoDB" id="9769912at2"/>
<dbReference type="UniPathway" id="UPA00050">
    <property type="reaction ID" value="UER00064"/>
</dbReference>
<dbReference type="Proteomes" id="UP000002495">
    <property type="component" value="Chromosome"/>
</dbReference>
<dbReference type="GO" id="GO:0005737">
    <property type="term" value="C:cytoplasm"/>
    <property type="evidence" value="ECO:0007669"/>
    <property type="project" value="UniProtKB-SubCell"/>
</dbReference>
<dbReference type="GO" id="GO:0005524">
    <property type="term" value="F:ATP binding"/>
    <property type="evidence" value="ECO:0007669"/>
    <property type="project" value="UniProtKB-UniRule"/>
</dbReference>
<dbReference type="GO" id="GO:0004413">
    <property type="term" value="F:homoserine kinase activity"/>
    <property type="evidence" value="ECO:0007669"/>
    <property type="project" value="UniProtKB-UniRule"/>
</dbReference>
<dbReference type="GO" id="GO:0009088">
    <property type="term" value="P:threonine biosynthetic process"/>
    <property type="evidence" value="ECO:0007669"/>
    <property type="project" value="UniProtKB-UniRule"/>
</dbReference>
<dbReference type="Gene3D" id="3.30.230.10">
    <property type="match status" value="1"/>
</dbReference>
<dbReference type="Gene3D" id="3.30.70.890">
    <property type="entry name" value="GHMP kinase, C-terminal domain"/>
    <property type="match status" value="1"/>
</dbReference>
<dbReference type="HAMAP" id="MF_00384">
    <property type="entry name" value="Homoser_kinase"/>
    <property type="match status" value="1"/>
</dbReference>
<dbReference type="InterPro" id="IPR013750">
    <property type="entry name" value="GHMP_kinase_C_dom"/>
</dbReference>
<dbReference type="InterPro" id="IPR036554">
    <property type="entry name" value="GHMP_kinase_C_sf"/>
</dbReference>
<dbReference type="InterPro" id="IPR006204">
    <property type="entry name" value="GHMP_kinase_N_dom"/>
</dbReference>
<dbReference type="InterPro" id="IPR006203">
    <property type="entry name" value="GHMP_knse_ATP-bd_CS"/>
</dbReference>
<dbReference type="InterPro" id="IPR000870">
    <property type="entry name" value="Homoserine_kinase"/>
</dbReference>
<dbReference type="InterPro" id="IPR020568">
    <property type="entry name" value="Ribosomal_Su5_D2-typ_SF"/>
</dbReference>
<dbReference type="InterPro" id="IPR014721">
    <property type="entry name" value="Ribsml_uS5_D2-typ_fold_subgr"/>
</dbReference>
<dbReference type="NCBIfam" id="TIGR00191">
    <property type="entry name" value="thrB"/>
    <property type="match status" value="1"/>
</dbReference>
<dbReference type="PANTHER" id="PTHR20861:SF1">
    <property type="entry name" value="HOMOSERINE KINASE"/>
    <property type="match status" value="1"/>
</dbReference>
<dbReference type="PANTHER" id="PTHR20861">
    <property type="entry name" value="HOMOSERINE/4-DIPHOSPHOCYTIDYL-2-C-METHYL-D-ERYTHRITOL KINASE"/>
    <property type="match status" value="1"/>
</dbReference>
<dbReference type="Pfam" id="PF08544">
    <property type="entry name" value="GHMP_kinases_C"/>
    <property type="match status" value="1"/>
</dbReference>
<dbReference type="Pfam" id="PF00288">
    <property type="entry name" value="GHMP_kinases_N"/>
    <property type="match status" value="1"/>
</dbReference>
<dbReference type="PIRSF" id="PIRSF000676">
    <property type="entry name" value="Homoser_kin"/>
    <property type="match status" value="1"/>
</dbReference>
<dbReference type="PRINTS" id="PR00958">
    <property type="entry name" value="HOMSERKINASE"/>
</dbReference>
<dbReference type="SUPFAM" id="SSF55060">
    <property type="entry name" value="GHMP Kinase, C-terminal domain"/>
    <property type="match status" value="1"/>
</dbReference>
<dbReference type="SUPFAM" id="SSF54211">
    <property type="entry name" value="Ribosomal protein S5 domain 2-like"/>
    <property type="match status" value="1"/>
</dbReference>
<dbReference type="PROSITE" id="PS00627">
    <property type="entry name" value="GHMP_KINASES_ATP"/>
    <property type="match status" value="1"/>
</dbReference>
<evidence type="ECO:0000255" key="1">
    <source>
        <dbReference type="HAMAP-Rule" id="MF_00384"/>
    </source>
</evidence>
<reference key="1">
    <citation type="journal article" date="2003" name="Proc. Natl. Acad. Sci. U.S.A.">
        <title>The complete genome sequence of the carcinogenic bacterium Helicobacter hepaticus.</title>
        <authorList>
            <person name="Suerbaum S."/>
            <person name="Josenhans C."/>
            <person name="Sterzenbach T."/>
            <person name="Drescher B."/>
            <person name="Brandt P."/>
            <person name="Bell M."/>
            <person name="Droege M."/>
            <person name="Fartmann B."/>
            <person name="Fischer H.-P."/>
            <person name="Ge Z."/>
            <person name="Hoerster A."/>
            <person name="Holland R."/>
            <person name="Klein K."/>
            <person name="Koenig J."/>
            <person name="Macko L."/>
            <person name="Mendz G.L."/>
            <person name="Nyakatura G."/>
            <person name="Schauer D.B."/>
            <person name="Shen Z."/>
            <person name="Weber J."/>
            <person name="Frosch M."/>
            <person name="Fox J.G."/>
        </authorList>
    </citation>
    <scope>NUCLEOTIDE SEQUENCE [LARGE SCALE GENOMIC DNA]</scope>
    <source>
        <strain>ATCC 51449 / 3B1</strain>
    </source>
</reference>
<proteinExistence type="inferred from homology"/>
<organism>
    <name type="scientific">Helicobacter hepaticus (strain ATCC 51449 / 3B1)</name>
    <dbReference type="NCBI Taxonomy" id="235279"/>
    <lineage>
        <taxon>Bacteria</taxon>
        <taxon>Pseudomonadati</taxon>
        <taxon>Campylobacterota</taxon>
        <taxon>Epsilonproteobacteria</taxon>
        <taxon>Campylobacterales</taxon>
        <taxon>Helicobacteraceae</taxon>
        <taxon>Helicobacter</taxon>
    </lineage>
</organism>
<comment type="function">
    <text evidence="1">Catalyzes the ATP-dependent phosphorylation of L-homoserine to L-homoserine phosphate.</text>
</comment>
<comment type="catalytic activity">
    <reaction evidence="1">
        <text>L-homoserine + ATP = O-phospho-L-homoserine + ADP + H(+)</text>
        <dbReference type="Rhea" id="RHEA:13985"/>
        <dbReference type="ChEBI" id="CHEBI:15378"/>
        <dbReference type="ChEBI" id="CHEBI:30616"/>
        <dbReference type="ChEBI" id="CHEBI:57476"/>
        <dbReference type="ChEBI" id="CHEBI:57590"/>
        <dbReference type="ChEBI" id="CHEBI:456216"/>
        <dbReference type="EC" id="2.7.1.39"/>
    </reaction>
</comment>
<comment type="pathway">
    <text evidence="1">Amino-acid biosynthesis; L-threonine biosynthesis; L-threonine from L-aspartate: step 4/5.</text>
</comment>
<comment type="subcellular location">
    <subcellularLocation>
        <location evidence="1">Cytoplasm</location>
    </subcellularLocation>
</comment>
<comment type="similarity">
    <text evidence="1">Belongs to the GHMP kinase family. Homoserine kinase subfamily.</text>
</comment>
<keyword id="KW-0028">Amino-acid biosynthesis</keyword>
<keyword id="KW-0067">ATP-binding</keyword>
<keyword id="KW-0963">Cytoplasm</keyword>
<keyword id="KW-0418">Kinase</keyword>
<keyword id="KW-0547">Nucleotide-binding</keyword>
<keyword id="KW-1185">Reference proteome</keyword>
<keyword id="KW-0791">Threonine biosynthesis</keyword>
<keyword id="KW-0808">Transferase</keyword>
<feature type="chain" id="PRO_0000156575" description="Homoserine kinase">
    <location>
        <begin position="1"/>
        <end position="299"/>
    </location>
</feature>
<feature type="binding site" evidence="1">
    <location>
        <begin position="84"/>
        <end position="94"/>
    </location>
    <ligand>
        <name>ATP</name>
        <dbReference type="ChEBI" id="CHEBI:30616"/>
    </ligand>
</feature>
<gene>
    <name evidence="1" type="primary">thrB</name>
    <name type="ordered locus">HH_1013</name>
</gene>
<protein>
    <recommendedName>
        <fullName evidence="1">Homoserine kinase</fullName>
        <shortName evidence="1">HK</shortName>
        <shortName evidence="1">HSK</shortName>
        <ecNumber evidence="1">2.7.1.39</ecNumber>
    </recommendedName>
</protein>